<gene>
    <name evidence="1" type="primary">gpsA</name>
    <name type="ordered locus">Spea_4214</name>
</gene>
<feature type="chain" id="PRO_1000080318" description="Glycerol-3-phosphate dehydrogenase [NAD(P)+]">
    <location>
        <begin position="1"/>
        <end position="339"/>
    </location>
</feature>
<feature type="active site" description="Proton acceptor" evidence="1">
    <location>
        <position position="194"/>
    </location>
</feature>
<feature type="binding site" evidence="1">
    <location>
        <position position="14"/>
    </location>
    <ligand>
        <name>NADPH</name>
        <dbReference type="ChEBI" id="CHEBI:57783"/>
    </ligand>
</feature>
<feature type="binding site" evidence="1">
    <location>
        <position position="15"/>
    </location>
    <ligand>
        <name>NADPH</name>
        <dbReference type="ChEBI" id="CHEBI:57783"/>
    </ligand>
</feature>
<feature type="binding site" evidence="1">
    <location>
        <position position="35"/>
    </location>
    <ligand>
        <name>NADPH</name>
        <dbReference type="ChEBI" id="CHEBI:57783"/>
    </ligand>
</feature>
<feature type="binding site" evidence="1">
    <location>
        <position position="109"/>
    </location>
    <ligand>
        <name>NADPH</name>
        <dbReference type="ChEBI" id="CHEBI:57783"/>
    </ligand>
</feature>
<feature type="binding site" evidence="1">
    <location>
        <position position="109"/>
    </location>
    <ligand>
        <name>sn-glycerol 3-phosphate</name>
        <dbReference type="ChEBI" id="CHEBI:57597"/>
    </ligand>
</feature>
<feature type="binding site" evidence="1">
    <location>
        <position position="138"/>
    </location>
    <ligand>
        <name>sn-glycerol 3-phosphate</name>
        <dbReference type="ChEBI" id="CHEBI:57597"/>
    </ligand>
</feature>
<feature type="binding site" evidence="1">
    <location>
        <position position="140"/>
    </location>
    <ligand>
        <name>sn-glycerol 3-phosphate</name>
        <dbReference type="ChEBI" id="CHEBI:57597"/>
    </ligand>
</feature>
<feature type="binding site" evidence="1">
    <location>
        <position position="142"/>
    </location>
    <ligand>
        <name>NADPH</name>
        <dbReference type="ChEBI" id="CHEBI:57783"/>
    </ligand>
</feature>
<feature type="binding site" evidence="1">
    <location>
        <position position="194"/>
    </location>
    <ligand>
        <name>sn-glycerol 3-phosphate</name>
        <dbReference type="ChEBI" id="CHEBI:57597"/>
    </ligand>
</feature>
<feature type="binding site" evidence="1">
    <location>
        <position position="247"/>
    </location>
    <ligand>
        <name>sn-glycerol 3-phosphate</name>
        <dbReference type="ChEBI" id="CHEBI:57597"/>
    </ligand>
</feature>
<feature type="binding site" evidence="1">
    <location>
        <position position="257"/>
    </location>
    <ligand>
        <name>sn-glycerol 3-phosphate</name>
        <dbReference type="ChEBI" id="CHEBI:57597"/>
    </ligand>
</feature>
<feature type="binding site" evidence="1">
    <location>
        <position position="258"/>
    </location>
    <ligand>
        <name>NADPH</name>
        <dbReference type="ChEBI" id="CHEBI:57783"/>
    </ligand>
</feature>
<feature type="binding site" evidence="1">
    <location>
        <position position="258"/>
    </location>
    <ligand>
        <name>sn-glycerol 3-phosphate</name>
        <dbReference type="ChEBI" id="CHEBI:57597"/>
    </ligand>
</feature>
<feature type="binding site" evidence="1">
    <location>
        <position position="259"/>
    </location>
    <ligand>
        <name>sn-glycerol 3-phosphate</name>
        <dbReference type="ChEBI" id="CHEBI:57597"/>
    </ligand>
</feature>
<feature type="binding site" evidence="1">
    <location>
        <position position="282"/>
    </location>
    <ligand>
        <name>NADPH</name>
        <dbReference type="ChEBI" id="CHEBI:57783"/>
    </ligand>
</feature>
<feature type="binding site" evidence="1">
    <location>
        <position position="284"/>
    </location>
    <ligand>
        <name>NADPH</name>
        <dbReference type="ChEBI" id="CHEBI:57783"/>
    </ligand>
</feature>
<accession>A8HAD7</accession>
<proteinExistence type="inferred from homology"/>
<protein>
    <recommendedName>
        <fullName evidence="1">Glycerol-3-phosphate dehydrogenase [NAD(P)+]</fullName>
        <ecNumber evidence="1">1.1.1.94</ecNumber>
    </recommendedName>
    <alternativeName>
        <fullName evidence="1">NAD(P)(+)-dependent glycerol-3-phosphate dehydrogenase</fullName>
    </alternativeName>
    <alternativeName>
        <fullName evidence="1">NAD(P)H-dependent dihydroxyacetone-phosphate reductase</fullName>
    </alternativeName>
</protein>
<keyword id="KW-0963">Cytoplasm</keyword>
<keyword id="KW-0444">Lipid biosynthesis</keyword>
<keyword id="KW-0443">Lipid metabolism</keyword>
<keyword id="KW-0520">NAD</keyword>
<keyword id="KW-0521">NADP</keyword>
<keyword id="KW-0547">Nucleotide-binding</keyword>
<keyword id="KW-0560">Oxidoreductase</keyword>
<keyword id="KW-0594">Phospholipid biosynthesis</keyword>
<keyword id="KW-1208">Phospholipid metabolism</keyword>
<keyword id="KW-1185">Reference proteome</keyword>
<name>GPDA_SHEPA</name>
<evidence type="ECO:0000255" key="1">
    <source>
        <dbReference type="HAMAP-Rule" id="MF_00394"/>
    </source>
</evidence>
<dbReference type="EC" id="1.1.1.94" evidence="1"/>
<dbReference type="EMBL" id="CP000851">
    <property type="protein sequence ID" value="ABV89524.1"/>
    <property type="molecule type" value="Genomic_DNA"/>
</dbReference>
<dbReference type="RefSeq" id="WP_012157401.1">
    <property type="nucleotide sequence ID" value="NC_009901.1"/>
</dbReference>
<dbReference type="SMR" id="A8HAD7"/>
<dbReference type="STRING" id="398579.Spea_4214"/>
<dbReference type="KEGG" id="spl:Spea_4214"/>
<dbReference type="eggNOG" id="COG0240">
    <property type="taxonomic scope" value="Bacteria"/>
</dbReference>
<dbReference type="HOGENOM" id="CLU_033449_0_2_6"/>
<dbReference type="OrthoDB" id="9812273at2"/>
<dbReference type="UniPathway" id="UPA00940"/>
<dbReference type="Proteomes" id="UP000002608">
    <property type="component" value="Chromosome"/>
</dbReference>
<dbReference type="GO" id="GO:0005829">
    <property type="term" value="C:cytosol"/>
    <property type="evidence" value="ECO:0007669"/>
    <property type="project" value="TreeGrafter"/>
</dbReference>
<dbReference type="GO" id="GO:0047952">
    <property type="term" value="F:glycerol-3-phosphate dehydrogenase [NAD(P)+] activity"/>
    <property type="evidence" value="ECO:0007669"/>
    <property type="project" value="UniProtKB-UniRule"/>
</dbReference>
<dbReference type="GO" id="GO:0051287">
    <property type="term" value="F:NAD binding"/>
    <property type="evidence" value="ECO:0007669"/>
    <property type="project" value="InterPro"/>
</dbReference>
<dbReference type="GO" id="GO:0005975">
    <property type="term" value="P:carbohydrate metabolic process"/>
    <property type="evidence" value="ECO:0007669"/>
    <property type="project" value="InterPro"/>
</dbReference>
<dbReference type="GO" id="GO:0046167">
    <property type="term" value="P:glycerol-3-phosphate biosynthetic process"/>
    <property type="evidence" value="ECO:0007669"/>
    <property type="project" value="UniProtKB-UniRule"/>
</dbReference>
<dbReference type="GO" id="GO:0046168">
    <property type="term" value="P:glycerol-3-phosphate catabolic process"/>
    <property type="evidence" value="ECO:0007669"/>
    <property type="project" value="InterPro"/>
</dbReference>
<dbReference type="GO" id="GO:0046474">
    <property type="term" value="P:glycerophospholipid biosynthetic process"/>
    <property type="evidence" value="ECO:0007669"/>
    <property type="project" value="TreeGrafter"/>
</dbReference>
<dbReference type="FunFam" id="1.10.1040.10:FF:000001">
    <property type="entry name" value="Glycerol-3-phosphate dehydrogenase [NAD(P)+]"/>
    <property type="match status" value="1"/>
</dbReference>
<dbReference type="FunFam" id="3.40.50.720:FF:000019">
    <property type="entry name" value="Glycerol-3-phosphate dehydrogenase [NAD(P)+]"/>
    <property type="match status" value="1"/>
</dbReference>
<dbReference type="Gene3D" id="1.10.1040.10">
    <property type="entry name" value="N-(1-d-carboxylethyl)-l-norvaline Dehydrogenase, domain 2"/>
    <property type="match status" value="1"/>
</dbReference>
<dbReference type="Gene3D" id="3.40.50.720">
    <property type="entry name" value="NAD(P)-binding Rossmann-like Domain"/>
    <property type="match status" value="1"/>
</dbReference>
<dbReference type="HAMAP" id="MF_00394">
    <property type="entry name" value="NAD_Glyc3P_dehydrog"/>
    <property type="match status" value="1"/>
</dbReference>
<dbReference type="InterPro" id="IPR008927">
    <property type="entry name" value="6-PGluconate_DH-like_C_sf"/>
</dbReference>
<dbReference type="InterPro" id="IPR013328">
    <property type="entry name" value="6PGD_dom2"/>
</dbReference>
<dbReference type="InterPro" id="IPR006168">
    <property type="entry name" value="G3P_DH_NAD-dep"/>
</dbReference>
<dbReference type="InterPro" id="IPR006109">
    <property type="entry name" value="G3P_DH_NAD-dep_C"/>
</dbReference>
<dbReference type="InterPro" id="IPR011128">
    <property type="entry name" value="G3P_DH_NAD-dep_N"/>
</dbReference>
<dbReference type="InterPro" id="IPR036291">
    <property type="entry name" value="NAD(P)-bd_dom_sf"/>
</dbReference>
<dbReference type="NCBIfam" id="NF000939">
    <property type="entry name" value="PRK00094.1-1"/>
    <property type="match status" value="1"/>
</dbReference>
<dbReference type="NCBIfam" id="NF000940">
    <property type="entry name" value="PRK00094.1-2"/>
    <property type="match status" value="1"/>
</dbReference>
<dbReference type="NCBIfam" id="NF000942">
    <property type="entry name" value="PRK00094.1-4"/>
    <property type="match status" value="1"/>
</dbReference>
<dbReference type="PANTHER" id="PTHR11728">
    <property type="entry name" value="GLYCEROL-3-PHOSPHATE DEHYDROGENASE"/>
    <property type="match status" value="1"/>
</dbReference>
<dbReference type="PANTHER" id="PTHR11728:SF1">
    <property type="entry name" value="GLYCEROL-3-PHOSPHATE DEHYDROGENASE [NAD(+)] 2, CHLOROPLASTIC"/>
    <property type="match status" value="1"/>
</dbReference>
<dbReference type="Pfam" id="PF07479">
    <property type="entry name" value="NAD_Gly3P_dh_C"/>
    <property type="match status" value="1"/>
</dbReference>
<dbReference type="Pfam" id="PF01210">
    <property type="entry name" value="NAD_Gly3P_dh_N"/>
    <property type="match status" value="1"/>
</dbReference>
<dbReference type="PIRSF" id="PIRSF000114">
    <property type="entry name" value="Glycerol-3-P_dh"/>
    <property type="match status" value="1"/>
</dbReference>
<dbReference type="PRINTS" id="PR00077">
    <property type="entry name" value="GPDHDRGNASE"/>
</dbReference>
<dbReference type="SUPFAM" id="SSF48179">
    <property type="entry name" value="6-phosphogluconate dehydrogenase C-terminal domain-like"/>
    <property type="match status" value="1"/>
</dbReference>
<dbReference type="SUPFAM" id="SSF51735">
    <property type="entry name" value="NAD(P)-binding Rossmann-fold domains"/>
    <property type="match status" value="1"/>
</dbReference>
<dbReference type="PROSITE" id="PS00957">
    <property type="entry name" value="NAD_G3PDH"/>
    <property type="match status" value="1"/>
</dbReference>
<reference key="1">
    <citation type="submission" date="2007-10" db="EMBL/GenBank/DDBJ databases">
        <title>Complete sequence of Shewanella pealeana ATCC 700345.</title>
        <authorList>
            <consortium name="US DOE Joint Genome Institute"/>
            <person name="Copeland A."/>
            <person name="Lucas S."/>
            <person name="Lapidus A."/>
            <person name="Barry K."/>
            <person name="Glavina del Rio T."/>
            <person name="Dalin E."/>
            <person name="Tice H."/>
            <person name="Pitluck S."/>
            <person name="Chertkov O."/>
            <person name="Brettin T."/>
            <person name="Bruce D."/>
            <person name="Detter J.C."/>
            <person name="Han C."/>
            <person name="Schmutz J."/>
            <person name="Larimer F."/>
            <person name="Land M."/>
            <person name="Hauser L."/>
            <person name="Kyrpides N."/>
            <person name="Kim E."/>
            <person name="Zhao J.-S.Z."/>
            <person name="Manno D."/>
            <person name="Hawari J."/>
            <person name="Richardson P."/>
        </authorList>
    </citation>
    <scope>NUCLEOTIDE SEQUENCE [LARGE SCALE GENOMIC DNA]</scope>
    <source>
        <strain>ATCC 700345 / ANG-SQ1</strain>
    </source>
</reference>
<comment type="function">
    <text evidence="1">Catalyzes the reduction of the glycolytic intermediate dihydroxyacetone phosphate (DHAP) to sn-glycerol 3-phosphate (G3P), the key precursor for phospholipid synthesis.</text>
</comment>
<comment type="catalytic activity">
    <reaction evidence="1">
        <text>sn-glycerol 3-phosphate + NAD(+) = dihydroxyacetone phosphate + NADH + H(+)</text>
        <dbReference type="Rhea" id="RHEA:11092"/>
        <dbReference type="ChEBI" id="CHEBI:15378"/>
        <dbReference type="ChEBI" id="CHEBI:57540"/>
        <dbReference type="ChEBI" id="CHEBI:57597"/>
        <dbReference type="ChEBI" id="CHEBI:57642"/>
        <dbReference type="ChEBI" id="CHEBI:57945"/>
        <dbReference type="EC" id="1.1.1.94"/>
    </reaction>
    <physiologicalReaction direction="right-to-left" evidence="1">
        <dbReference type="Rhea" id="RHEA:11094"/>
    </physiologicalReaction>
</comment>
<comment type="catalytic activity">
    <reaction evidence="1">
        <text>sn-glycerol 3-phosphate + NADP(+) = dihydroxyacetone phosphate + NADPH + H(+)</text>
        <dbReference type="Rhea" id="RHEA:11096"/>
        <dbReference type="ChEBI" id="CHEBI:15378"/>
        <dbReference type="ChEBI" id="CHEBI:57597"/>
        <dbReference type="ChEBI" id="CHEBI:57642"/>
        <dbReference type="ChEBI" id="CHEBI:57783"/>
        <dbReference type="ChEBI" id="CHEBI:58349"/>
        <dbReference type="EC" id="1.1.1.94"/>
    </reaction>
    <physiologicalReaction direction="right-to-left" evidence="1">
        <dbReference type="Rhea" id="RHEA:11098"/>
    </physiologicalReaction>
</comment>
<comment type="pathway">
    <text evidence="1">Membrane lipid metabolism; glycerophospholipid metabolism.</text>
</comment>
<comment type="subcellular location">
    <subcellularLocation>
        <location evidence="1">Cytoplasm</location>
    </subcellularLocation>
</comment>
<comment type="similarity">
    <text evidence="1">Belongs to the NAD-dependent glycerol-3-phosphate dehydrogenase family.</text>
</comment>
<sequence length="339" mass="36031">MKNTADITVLGAGSYGTALAISLASNGHRTMLWGHEPEHIENLKNDKSNEAFLPGIPLPDLLIPEADLATALAASNNVLVVVPSHVFGLVLTQAKPLLRKDSRIVWATKGLEPETGRLIQDVAREAIGDEFPLAVLSGPTFAKELAAGMPTAISIAGTDPQFTKDLVELLHSPKRLRVYANDDFIGLQLGGAVKNVIAIGAGLSDGIGFGANARTALITRGLVELTRLGEAMGAQASTFMGMAGLGDLVLTCTDNQSRNRRFGLALGKGSDVETAQDEIGQVVEGYRNTKEVYTLAKRLGVEMPITEQVYQVLYKGKSPVDAAKELLSREKKSETSSAE</sequence>
<organism>
    <name type="scientific">Shewanella pealeana (strain ATCC 700345 / ANG-SQ1)</name>
    <dbReference type="NCBI Taxonomy" id="398579"/>
    <lineage>
        <taxon>Bacteria</taxon>
        <taxon>Pseudomonadati</taxon>
        <taxon>Pseudomonadota</taxon>
        <taxon>Gammaproteobacteria</taxon>
        <taxon>Alteromonadales</taxon>
        <taxon>Shewanellaceae</taxon>
        <taxon>Shewanella</taxon>
    </lineage>
</organism>